<gene>
    <name evidence="1" type="primary">nuoK</name>
    <name type="ordered locus">BARBAKC583_0788</name>
</gene>
<comment type="function">
    <text evidence="1">NDH-1 shuttles electrons from NADH, via FMN and iron-sulfur (Fe-S) centers, to quinones in the respiratory chain. The immediate electron acceptor for the enzyme in this species is believed to be ubiquinone. Couples the redox reaction to proton translocation (for every two electrons transferred, four hydrogen ions are translocated across the cytoplasmic membrane), and thus conserves the redox energy in a proton gradient.</text>
</comment>
<comment type="catalytic activity">
    <reaction evidence="1">
        <text>a quinone + NADH + 5 H(+)(in) = a quinol + NAD(+) + 4 H(+)(out)</text>
        <dbReference type="Rhea" id="RHEA:57888"/>
        <dbReference type="ChEBI" id="CHEBI:15378"/>
        <dbReference type="ChEBI" id="CHEBI:24646"/>
        <dbReference type="ChEBI" id="CHEBI:57540"/>
        <dbReference type="ChEBI" id="CHEBI:57945"/>
        <dbReference type="ChEBI" id="CHEBI:132124"/>
    </reaction>
</comment>
<comment type="subunit">
    <text evidence="1">NDH-1 is composed of 14 different subunits. Subunits NuoA, H, J, K, L, M, N constitute the membrane sector of the complex.</text>
</comment>
<comment type="subcellular location">
    <subcellularLocation>
        <location evidence="1">Cell inner membrane</location>
        <topology evidence="1">Multi-pass membrane protein</topology>
    </subcellularLocation>
</comment>
<comment type="similarity">
    <text evidence="1">Belongs to the complex I subunit 4L family.</text>
</comment>
<name>NUOK_BARBK</name>
<keyword id="KW-0997">Cell inner membrane</keyword>
<keyword id="KW-1003">Cell membrane</keyword>
<keyword id="KW-0472">Membrane</keyword>
<keyword id="KW-0520">NAD</keyword>
<keyword id="KW-0874">Quinone</keyword>
<keyword id="KW-1278">Translocase</keyword>
<keyword id="KW-0812">Transmembrane</keyword>
<keyword id="KW-1133">Transmembrane helix</keyword>
<keyword id="KW-0813">Transport</keyword>
<keyword id="KW-0830">Ubiquinone</keyword>
<sequence length="102" mass="11119">MYIGIAHYLTVSAIMFTVGIFGIFLNRKNVIIILMSIELILLSVNLNFVAFSAFLHDLVGQIFALFILTVAAAEAAIGLAILVVFFRNRGSIAVEDVNVMKG</sequence>
<evidence type="ECO:0000255" key="1">
    <source>
        <dbReference type="HAMAP-Rule" id="MF_01456"/>
    </source>
</evidence>
<feature type="chain" id="PRO_0000389951" description="NADH-quinone oxidoreductase subunit K">
    <location>
        <begin position="1"/>
        <end position="102"/>
    </location>
</feature>
<feature type="transmembrane region" description="Helical" evidence="1">
    <location>
        <begin position="5"/>
        <end position="25"/>
    </location>
</feature>
<feature type="transmembrane region" description="Helical" evidence="1">
    <location>
        <begin position="31"/>
        <end position="51"/>
    </location>
</feature>
<feature type="transmembrane region" description="Helical" evidence="1">
    <location>
        <begin position="66"/>
        <end position="86"/>
    </location>
</feature>
<organism>
    <name type="scientific">Bartonella bacilliformis (strain ATCC 35685 / KC583 / Herrer 020/F12,63)</name>
    <dbReference type="NCBI Taxonomy" id="360095"/>
    <lineage>
        <taxon>Bacteria</taxon>
        <taxon>Pseudomonadati</taxon>
        <taxon>Pseudomonadota</taxon>
        <taxon>Alphaproteobacteria</taxon>
        <taxon>Hyphomicrobiales</taxon>
        <taxon>Bartonellaceae</taxon>
        <taxon>Bartonella</taxon>
    </lineage>
</organism>
<protein>
    <recommendedName>
        <fullName evidence="1">NADH-quinone oxidoreductase subunit K</fullName>
        <ecNumber evidence="1">7.1.1.-</ecNumber>
    </recommendedName>
    <alternativeName>
        <fullName evidence="1">NADH dehydrogenase I subunit K</fullName>
    </alternativeName>
    <alternativeName>
        <fullName evidence="1">NDH-1 subunit K</fullName>
    </alternativeName>
</protein>
<reference key="1">
    <citation type="submission" date="2006-12" db="EMBL/GenBank/DDBJ databases">
        <authorList>
            <person name="Hendrix L."/>
            <person name="Mohamoud Y."/>
            <person name="Radune D."/>
            <person name="Shvartsbeyn A."/>
            <person name="Daugherty S."/>
            <person name="Dodson R."/>
            <person name="Durkin A.S."/>
            <person name="Harkins D."/>
            <person name="Huot H."/>
            <person name="Kothari S.P."/>
            <person name="Madupu R."/>
            <person name="Li J."/>
            <person name="Nelson W.C."/>
            <person name="Shrivastava S."/>
            <person name="Giglio M.G."/>
            <person name="Haft D."/>
            <person name="Selengut J."/>
            <person name="Fraser-Ligget C."/>
            <person name="Seshadri R."/>
        </authorList>
    </citation>
    <scope>NUCLEOTIDE SEQUENCE [LARGE SCALE GENOMIC DNA]</scope>
    <source>
        <strain>ATCC 35685 / KC583 / Herrer 020/F12,63</strain>
    </source>
</reference>
<proteinExistence type="inferred from homology"/>
<accession>A1USX7</accession>
<dbReference type="EC" id="7.1.1.-" evidence="1"/>
<dbReference type="EMBL" id="CP000524">
    <property type="protein sequence ID" value="ABM44979.1"/>
    <property type="molecule type" value="Genomic_DNA"/>
</dbReference>
<dbReference type="RefSeq" id="WP_005767079.1">
    <property type="nucleotide sequence ID" value="NC_008783.1"/>
</dbReference>
<dbReference type="SMR" id="A1USX7"/>
<dbReference type="STRING" id="360095.BARBAKC583_0788"/>
<dbReference type="GeneID" id="4683946"/>
<dbReference type="KEGG" id="bbk:BARBAKC583_0788"/>
<dbReference type="PATRIC" id="fig|360095.6.peg.761"/>
<dbReference type="eggNOG" id="COG0713">
    <property type="taxonomic scope" value="Bacteria"/>
</dbReference>
<dbReference type="HOGENOM" id="CLU_144724_2_0_5"/>
<dbReference type="OrthoDB" id="9811124at2"/>
<dbReference type="Proteomes" id="UP000000643">
    <property type="component" value="Chromosome"/>
</dbReference>
<dbReference type="GO" id="GO:0030964">
    <property type="term" value="C:NADH dehydrogenase complex"/>
    <property type="evidence" value="ECO:0007669"/>
    <property type="project" value="TreeGrafter"/>
</dbReference>
<dbReference type="GO" id="GO:0005886">
    <property type="term" value="C:plasma membrane"/>
    <property type="evidence" value="ECO:0007669"/>
    <property type="project" value="UniProtKB-SubCell"/>
</dbReference>
<dbReference type="GO" id="GO:0050136">
    <property type="term" value="F:NADH:ubiquinone reductase (non-electrogenic) activity"/>
    <property type="evidence" value="ECO:0007669"/>
    <property type="project" value="UniProtKB-UniRule"/>
</dbReference>
<dbReference type="GO" id="GO:0048038">
    <property type="term" value="F:quinone binding"/>
    <property type="evidence" value="ECO:0007669"/>
    <property type="project" value="UniProtKB-KW"/>
</dbReference>
<dbReference type="GO" id="GO:0042773">
    <property type="term" value="P:ATP synthesis coupled electron transport"/>
    <property type="evidence" value="ECO:0007669"/>
    <property type="project" value="InterPro"/>
</dbReference>
<dbReference type="FunFam" id="1.10.287.3510:FF:000001">
    <property type="entry name" value="NADH-quinone oxidoreductase subunit K"/>
    <property type="match status" value="1"/>
</dbReference>
<dbReference type="Gene3D" id="1.10.287.3510">
    <property type="match status" value="1"/>
</dbReference>
<dbReference type="HAMAP" id="MF_01456">
    <property type="entry name" value="NDH1_NuoK"/>
    <property type="match status" value="1"/>
</dbReference>
<dbReference type="InterPro" id="IPR001133">
    <property type="entry name" value="NADH_UbQ_OxRdtase_chain4L/K"/>
</dbReference>
<dbReference type="InterPro" id="IPR039428">
    <property type="entry name" value="NUOK/Mnh_C1-like"/>
</dbReference>
<dbReference type="NCBIfam" id="NF004320">
    <property type="entry name" value="PRK05715.1-2"/>
    <property type="match status" value="1"/>
</dbReference>
<dbReference type="NCBIfam" id="NF004321">
    <property type="entry name" value="PRK05715.1-3"/>
    <property type="match status" value="1"/>
</dbReference>
<dbReference type="NCBIfam" id="NF004323">
    <property type="entry name" value="PRK05715.1-5"/>
    <property type="match status" value="1"/>
</dbReference>
<dbReference type="PANTHER" id="PTHR11434:SF21">
    <property type="entry name" value="NADH DEHYDROGENASE SUBUNIT 4L-RELATED"/>
    <property type="match status" value="1"/>
</dbReference>
<dbReference type="PANTHER" id="PTHR11434">
    <property type="entry name" value="NADH-UBIQUINONE OXIDOREDUCTASE SUBUNIT ND4L"/>
    <property type="match status" value="1"/>
</dbReference>
<dbReference type="Pfam" id="PF00420">
    <property type="entry name" value="Oxidored_q2"/>
    <property type="match status" value="1"/>
</dbReference>